<protein>
    <recommendedName>
        <fullName evidence="1">Photosystem II reaction center protein T</fullName>
        <shortName evidence="1">PSII-T</shortName>
    </recommendedName>
</protein>
<reference key="1">
    <citation type="journal article" date="2000" name="Am. J. Bot.">
        <title>Utility of 17 chloroplast genes for inferring the phylogeny of the basal angiosperms.</title>
        <authorList>
            <person name="Graham S.W."/>
            <person name="Olmstead R.G."/>
        </authorList>
    </citation>
    <scope>NUCLEOTIDE SEQUENCE [GENOMIC DNA]</scope>
</reference>
<keyword id="KW-0150">Chloroplast</keyword>
<keyword id="KW-0472">Membrane</keyword>
<keyword id="KW-0602">Photosynthesis</keyword>
<keyword id="KW-0604">Photosystem II</keyword>
<keyword id="KW-0934">Plastid</keyword>
<keyword id="KW-0793">Thylakoid</keyword>
<keyword id="KW-0812">Transmembrane</keyword>
<keyword id="KW-1133">Transmembrane helix</keyword>
<dbReference type="EMBL" id="AF123849">
    <property type="protein sequence ID" value="AAG26274.1"/>
    <property type="molecule type" value="Genomic_DNA"/>
</dbReference>
<dbReference type="RefSeq" id="YP_009528913.1">
    <property type="nucleotide sequence ID" value="NC_039708.1"/>
</dbReference>
<dbReference type="SMR" id="Q7J193"/>
<dbReference type="GeneID" id="38328476"/>
<dbReference type="GO" id="GO:0009535">
    <property type="term" value="C:chloroplast thylakoid membrane"/>
    <property type="evidence" value="ECO:0007669"/>
    <property type="project" value="UniProtKB-SubCell"/>
</dbReference>
<dbReference type="GO" id="GO:0009539">
    <property type="term" value="C:photosystem II reaction center"/>
    <property type="evidence" value="ECO:0007669"/>
    <property type="project" value="InterPro"/>
</dbReference>
<dbReference type="GO" id="GO:0015979">
    <property type="term" value="P:photosynthesis"/>
    <property type="evidence" value="ECO:0007669"/>
    <property type="project" value="UniProtKB-UniRule"/>
</dbReference>
<dbReference type="HAMAP" id="MF_00808">
    <property type="entry name" value="PSII_PsbT"/>
    <property type="match status" value="1"/>
</dbReference>
<dbReference type="InterPro" id="IPR001743">
    <property type="entry name" value="PSII_PsbT"/>
</dbReference>
<dbReference type="InterPro" id="IPR037268">
    <property type="entry name" value="PSII_PsbT_sf"/>
</dbReference>
<dbReference type="PANTHER" id="PTHR36411">
    <property type="match status" value="1"/>
</dbReference>
<dbReference type="PANTHER" id="PTHR36411:SF2">
    <property type="entry name" value="PHOTOSYSTEM II REACTION CENTER PROTEIN T"/>
    <property type="match status" value="1"/>
</dbReference>
<dbReference type="Pfam" id="PF01405">
    <property type="entry name" value="PsbT"/>
    <property type="match status" value="1"/>
</dbReference>
<dbReference type="SUPFAM" id="SSF161029">
    <property type="entry name" value="Photosystem II reaction center protein T, PsbT"/>
    <property type="match status" value="1"/>
</dbReference>
<sequence>MEALVYTFLLVSTLGIIFFAIFFREPPKVPTKKMK</sequence>
<comment type="function">
    <text evidence="1">Found at the monomer-monomer interface of the photosystem II (PS II) dimer, plays a role in assembly and dimerization of PSII. PSII is a light-driven water plastoquinone oxidoreductase, using light energy to abstract electrons from H(2)O, generating a proton gradient subsequently used for ATP formation.</text>
</comment>
<comment type="subunit">
    <text evidence="1">PSII is composed of 1 copy each of membrane proteins PsbA, PsbB, PsbC, PsbD, PsbE, PsbF, PsbH, PsbI, PsbJ, PsbK, PsbL, PsbM, PsbT, PsbY, PsbZ, Psb30/Ycf12, at least 3 peripheral proteins of the oxygen-evolving complex and a large number of cofactors. It forms dimeric complexes.</text>
</comment>
<comment type="subcellular location">
    <subcellularLocation>
        <location evidence="1">Plastid</location>
        <location evidence="1">Chloroplast thylakoid membrane</location>
        <topology evidence="1">Single-pass membrane protein</topology>
    </subcellularLocation>
</comment>
<comment type="similarity">
    <text evidence="1">Belongs to the PsbT family.</text>
</comment>
<proteinExistence type="inferred from homology"/>
<evidence type="ECO:0000255" key="1">
    <source>
        <dbReference type="HAMAP-Rule" id="MF_00808"/>
    </source>
</evidence>
<organism>
    <name type="scientific">Dioscorea bulbifera</name>
    <name type="common">Air potato</name>
    <name type="synonym">Dioscorea latifolia</name>
    <dbReference type="NCBI Taxonomy" id="35874"/>
    <lineage>
        <taxon>Eukaryota</taxon>
        <taxon>Viridiplantae</taxon>
        <taxon>Streptophyta</taxon>
        <taxon>Embryophyta</taxon>
        <taxon>Tracheophyta</taxon>
        <taxon>Spermatophyta</taxon>
        <taxon>Magnoliopsida</taxon>
        <taxon>Liliopsida</taxon>
        <taxon>Dioscoreales</taxon>
        <taxon>Dioscoreaceae</taxon>
        <taxon>Dioscorea</taxon>
    </lineage>
</organism>
<feature type="chain" id="PRO_0000217927" description="Photosystem II reaction center protein T">
    <location>
        <begin position="1"/>
        <end position="35"/>
    </location>
</feature>
<feature type="transmembrane region" description="Helical" evidence="1">
    <location>
        <begin position="3"/>
        <end position="23"/>
    </location>
</feature>
<name>PSBT_DIOBU</name>
<gene>
    <name evidence="1" type="primary">psbT</name>
</gene>
<accession>Q7J193</accession>
<geneLocation type="chloroplast"/>